<name>MURG_SHESH</name>
<dbReference type="EC" id="2.4.1.227" evidence="1"/>
<dbReference type="EMBL" id="CP000821">
    <property type="protein sequence ID" value="ABV35023.1"/>
    <property type="molecule type" value="Genomic_DNA"/>
</dbReference>
<dbReference type="RefSeq" id="WP_012140760.1">
    <property type="nucleotide sequence ID" value="NC_009831.1"/>
</dbReference>
<dbReference type="SMR" id="A8FQA0"/>
<dbReference type="STRING" id="425104.Ssed_0410"/>
<dbReference type="CAZy" id="GT28">
    <property type="family name" value="Glycosyltransferase Family 28"/>
</dbReference>
<dbReference type="KEGG" id="sse:Ssed_0410"/>
<dbReference type="eggNOG" id="COG0707">
    <property type="taxonomic scope" value="Bacteria"/>
</dbReference>
<dbReference type="HOGENOM" id="CLU_037404_2_0_6"/>
<dbReference type="OrthoDB" id="9808936at2"/>
<dbReference type="UniPathway" id="UPA00219"/>
<dbReference type="Proteomes" id="UP000002015">
    <property type="component" value="Chromosome"/>
</dbReference>
<dbReference type="GO" id="GO:0005886">
    <property type="term" value="C:plasma membrane"/>
    <property type="evidence" value="ECO:0007669"/>
    <property type="project" value="UniProtKB-SubCell"/>
</dbReference>
<dbReference type="GO" id="GO:0051991">
    <property type="term" value="F:UDP-N-acetyl-D-glucosamine:N-acetylmuramoyl-L-alanyl-D-glutamyl-meso-2,6-diaminopimelyl-D-alanyl-D-alanine-diphosphoundecaprenol 4-beta-N-acetylglucosaminlytransferase activity"/>
    <property type="evidence" value="ECO:0007669"/>
    <property type="project" value="RHEA"/>
</dbReference>
<dbReference type="GO" id="GO:0050511">
    <property type="term" value="F:undecaprenyldiphospho-muramoylpentapeptide beta-N-acetylglucosaminyltransferase activity"/>
    <property type="evidence" value="ECO:0007669"/>
    <property type="project" value="UniProtKB-UniRule"/>
</dbReference>
<dbReference type="GO" id="GO:0005975">
    <property type="term" value="P:carbohydrate metabolic process"/>
    <property type="evidence" value="ECO:0007669"/>
    <property type="project" value="InterPro"/>
</dbReference>
<dbReference type="GO" id="GO:0051301">
    <property type="term" value="P:cell division"/>
    <property type="evidence" value="ECO:0007669"/>
    <property type="project" value="UniProtKB-KW"/>
</dbReference>
<dbReference type="GO" id="GO:0071555">
    <property type="term" value="P:cell wall organization"/>
    <property type="evidence" value="ECO:0007669"/>
    <property type="project" value="UniProtKB-KW"/>
</dbReference>
<dbReference type="GO" id="GO:0030259">
    <property type="term" value="P:lipid glycosylation"/>
    <property type="evidence" value="ECO:0007669"/>
    <property type="project" value="UniProtKB-UniRule"/>
</dbReference>
<dbReference type="GO" id="GO:0009252">
    <property type="term" value="P:peptidoglycan biosynthetic process"/>
    <property type="evidence" value="ECO:0007669"/>
    <property type="project" value="UniProtKB-UniRule"/>
</dbReference>
<dbReference type="GO" id="GO:0008360">
    <property type="term" value="P:regulation of cell shape"/>
    <property type="evidence" value="ECO:0007669"/>
    <property type="project" value="UniProtKB-KW"/>
</dbReference>
<dbReference type="CDD" id="cd03785">
    <property type="entry name" value="GT28_MurG"/>
    <property type="match status" value="1"/>
</dbReference>
<dbReference type="Gene3D" id="3.40.50.2000">
    <property type="entry name" value="Glycogen Phosphorylase B"/>
    <property type="match status" value="2"/>
</dbReference>
<dbReference type="HAMAP" id="MF_00033">
    <property type="entry name" value="MurG"/>
    <property type="match status" value="1"/>
</dbReference>
<dbReference type="InterPro" id="IPR006009">
    <property type="entry name" value="GlcNAc_MurG"/>
</dbReference>
<dbReference type="InterPro" id="IPR007235">
    <property type="entry name" value="Glyco_trans_28_C"/>
</dbReference>
<dbReference type="InterPro" id="IPR004276">
    <property type="entry name" value="GlycoTrans_28_N"/>
</dbReference>
<dbReference type="NCBIfam" id="TIGR01133">
    <property type="entry name" value="murG"/>
    <property type="match status" value="1"/>
</dbReference>
<dbReference type="PANTHER" id="PTHR21015:SF22">
    <property type="entry name" value="GLYCOSYLTRANSFERASE"/>
    <property type="match status" value="1"/>
</dbReference>
<dbReference type="PANTHER" id="PTHR21015">
    <property type="entry name" value="UDP-N-ACETYLGLUCOSAMINE--N-ACETYLMURAMYL-(PENTAPEPTIDE) PYROPHOSPHORYL-UNDECAPRENOL N-ACETYLGLUCOSAMINE TRANSFERASE 1"/>
    <property type="match status" value="1"/>
</dbReference>
<dbReference type="Pfam" id="PF04101">
    <property type="entry name" value="Glyco_tran_28_C"/>
    <property type="match status" value="1"/>
</dbReference>
<dbReference type="Pfam" id="PF03033">
    <property type="entry name" value="Glyco_transf_28"/>
    <property type="match status" value="1"/>
</dbReference>
<dbReference type="SUPFAM" id="SSF53756">
    <property type="entry name" value="UDP-Glycosyltransferase/glycogen phosphorylase"/>
    <property type="match status" value="1"/>
</dbReference>
<organism>
    <name type="scientific">Shewanella sediminis (strain HAW-EB3)</name>
    <dbReference type="NCBI Taxonomy" id="425104"/>
    <lineage>
        <taxon>Bacteria</taxon>
        <taxon>Pseudomonadati</taxon>
        <taxon>Pseudomonadota</taxon>
        <taxon>Gammaproteobacteria</taxon>
        <taxon>Alteromonadales</taxon>
        <taxon>Shewanellaceae</taxon>
        <taxon>Shewanella</taxon>
    </lineage>
</organism>
<proteinExistence type="inferred from homology"/>
<comment type="function">
    <text evidence="1">Cell wall formation. Catalyzes the transfer of a GlcNAc subunit on undecaprenyl-pyrophosphoryl-MurNAc-pentapeptide (lipid intermediate I) to form undecaprenyl-pyrophosphoryl-MurNAc-(pentapeptide)GlcNAc (lipid intermediate II).</text>
</comment>
<comment type="catalytic activity">
    <reaction evidence="1">
        <text>di-trans,octa-cis-undecaprenyl diphospho-N-acetyl-alpha-D-muramoyl-L-alanyl-D-glutamyl-meso-2,6-diaminopimeloyl-D-alanyl-D-alanine + UDP-N-acetyl-alpha-D-glucosamine = di-trans,octa-cis-undecaprenyl diphospho-[N-acetyl-alpha-D-glucosaminyl-(1-&gt;4)]-N-acetyl-alpha-D-muramoyl-L-alanyl-D-glutamyl-meso-2,6-diaminopimeloyl-D-alanyl-D-alanine + UDP + H(+)</text>
        <dbReference type="Rhea" id="RHEA:31227"/>
        <dbReference type="ChEBI" id="CHEBI:15378"/>
        <dbReference type="ChEBI" id="CHEBI:57705"/>
        <dbReference type="ChEBI" id="CHEBI:58223"/>
        <dbReference type="ChEBI" id="CHEBI:61387"/>
        <dbReference type="ChEBI" id="CHEBI:61388"/>
        <dbReference type="EC" id="2.4.1.227"/>
    </reaction>
</comment>
<comment type="pathway">
    <text evidence="1">Cell wall biogenesis; peptidoglycan biosynthesis.</text>
</comment>
<comment type="subcellular location">
    <subcellularLocation>
        <location evidence="1">Cell inner membrane</location>
        <topology evidence="1">Peripheral membrane protein</topology>
        <orientation evidence="1">Cytoplasmic side</orientation>
    </subcellularLocation>
</comment>
<comment type="similarity">
    <text evidence="1">Belongs to the glycosyltransferase 28 family. MurG subfamily.</text>
</comment>
<sequence>MTTVNTDKRILIMAGGTGGHVFPALAVAKYLCQQGWQVRWLGTAERMEARLVPQHGFDIDFIDIKGVRGNGLLRKLAAPFKVIRSIMQAQAVIKEFKPDVVLGMGGFASGPGGVAARLSGLPLVLHEQNAIPGMTNKILARIASQVLCAFEDTFDNVEAEVVGNPIREELIALGDSNVDPVTDDALKVLVVGGSLGAKVFNDLMPSVTAAVSKTHSITVWHQVGKGNLQGVKAEYQHLGQDGSVNVAEFIDDMEAAYRWADVVLCRSGALTVSEVAAVGLPSLLVPYPHAVDDHQTKNAQVLVQAGGAFLLPQTILDANKLIGKLQILASDRNELAQMGLRAKSAAVLDATQKVASVCIRLAGKD</sequence>
<evidence type="ECO:0000255" key="1">
    <source>
        <dbReference type="HAMAP-Rule" id="MF_00033"/>
    </source>
</evidence>
<protein>
    <recommendedName>
        <fullName evidence="1">UDP-N-acetylglucosamine--N-acetylmuramyl-(pentapeptide) pyrophosphoryl-undecaprenol N-acetylglucosamine transferase</fullName>
        <ecNumber evidence="1">2.4.1.227</ecNumber>
    </recommendedName>
    <alternativeName>
        <fullName evidence="1">Undecaprenyl-PP-MurNAc-pentapeptide-UDPGlcNAc GlcNAc transferase</fullName>
    </alternativeName>
</protein>
<reference key="1">
    <citation type="submission" date="2007-08" db="EMBL/GenBank/DDBJ databases">
        <title>Complete sequence of Shewanella sediminis HAW-EB3.</title>
        <authorList>
            <consortium name="US DOE Joint Genome Institute"/>
            <person name="Copeland A."/>
            <person name="Lucas S."/>
            <person name="Lapidus A."/>
            <person name="Barry K."/>
            <person name="Glavina del Rio T."/>
            <person name="Dalin E."/>
            <person name="Tice H."/>
            <person name="Pitluck S."/>
            <person name="Chertkov O."/>
            <person name="Brettin T."/>
            <person name="Bruce D."/>
            <person name="Detter J.C."/>
            <person name="Han C."/>
            <person name="Schmutz J."/>
            <person name="Larimer F."/>
            <person name="Land M."/>
            <person name="Hauser L."/>
            <person name="Kyrpides N."/>
            <person name="Kim E."/>
            <person name="Zhao J.-S."/>
            <person name="Richardson P."/>
        </authorList>
    </citation>
    <scope>NUCLEOTIDE SEQUENCE [LARGE SCALE GENOMIC DNA]</scope>
    <source>
        <strain>HAW-EB3</strain>
    </source>
</reference>
<accession>A8FQA0</accession>
<gene>
    <name evidence="1" type="primary">murG</name>
    <name type="ordered locus">Ssed_0410</name>
</gene>
<keyword id="KW-0131">Cell cycle</keyword>
<keyword id="KW-0132">Cell division</keyword>
<keyword id="KW-0997">Cell inner membrane</keyword>
<keyword id="KW-1003">Cell membrane</keyword>
<keyword id="KW-0133">Cell shape</keyword>
<keyword id="KW-0961">Cell wall biogenesis/degradation</keyword>
<keyword id="KW-0328">Glycosyltransferase</keyword>
<keyword id="KW-0472">Membrane</keyword>
<keyword id="KW-0573">Peptidoglycan synthesis</keyword>
<keyword id="KW-1185">Reference proteome</keyword>
<keyword id="KW-0808">Transferase</keyword>
<feature type="chain" id="PRO_1000074472" description="UDP-N-acetylglucosamine--N-acetylmuramyl-(pentapeptide) pyrophosphoryl-undecaprenol N-acetylglucosamine transferase">
    <location>
        <begin position="1"/>
        <end position="365"/>
    </location>
</feature>
<feature type="binding site" evidence="1">
    <location>
        <begin position="17"/>
        <end position="19"/>
    </location>
    <ligand>
        <name>UDP-N-acetyl-alpha-D-glucosamine</name>
        <dbReference type="ChEBI" id="CHEBI:57705"/>
    </ligand>
</feature>
<feature type="binding site" evidence="1">
    <location>
        <position position="129"/>
    </location>
    <ligand>
        <name>UDP-N-acetyl-alpha-D-glucosamine</name>
        <dbReference type="ChEBI" id="CHEBI:57705"/>
    </ligand>
</feature>
<feature type="binding site" evidence="1">
    <location>
        <position position="167"/>
    </location>
    <ligand>
        <name>UDP-N-acetyl-alpha-D-glucosamine</name>
        <dbReference type="ChEBI" id="CHEBI:57705"/>
    </ligand>
</feature>
<feature type="binding site" evidence="1">
    <location>
        <position position="194"/>
    </location>
    <ligand>
        <name>UDP-N-acetyl-alpha-D-glucosamine</name>
        <dbReference type="ChEBI" id="CHEBI:57705"/>
    </ligand>
</feature>
<feature type="binding site" evidence="1">
    <location>
        <position position="250"/>
    </location>
    <ligand>
        <name>UDP-N-acetyl-alpha-D-glucosamine</name>
        <dbReference type="ChEBI" id="CHEBI:57705"/>
    </ligand>
</feature>
<feature type="binding site" evidence="1">
    <location>
        <begin position="269"/>
        <end position="274"/>
    </location>
    <ligand>
        <name>UDP-N-acetyl-alpha-D-glucosamine</name>
        <dbReference type="ChEBI" id="CHEBI:57705"/>
    </ligand>
</feature>
<feature type="binding site" evidence="1">
    <location>
        <position position="295"/>
    </location>
    <ligand>
        <name>UDP-N-acetyl-alpha-D-glucosamine</name>
        <dbReference type="ChEBI" id="CHEBI:57705"/>
    </ligand>
</feature>